<proteinExistence type="inferred from homology"/>
<name>CHLL_PROM1</name>
<sequence>MTSTITRKEDGEGSVQVKQDPKAQIQEGALVIAVYGKGGIGKSTTSSNLSAAFSKLGKKVLQIGCDPKHDSTFTLTHKMVPTVIDILEEVDFHSEELRPEDFMFKGFNGVMCVESGGPPAGTGCGGYVTGQTVKLLKEHHLLEDTDVVIFDVLGDVVCGGFAAPLQHANYCLIVTANDFDSIFAMNRIVAAINAKAKNYKVRLGGVIANRSAELDQIEKFNERTGLKTMAHFRNVDAIRRSRLKKCTIFEMDSEEEGVVEVQNEYLSLAQKMIDNVEPLEAEPLKDREIFDLLGFD</sequence>
<dbReference type="EC" id="1.3.7.7" evidence="1"/>
<dbReference type="EMBL" id="CP000553">
    <property type="protein sequence ID" value="ABM75159.1"/>
    <property type="molecule type" value="Genomic_DNA"/>
</dbReference>
<dbReference type="SMR" id="A2C0Z9"/>
<dbReference type="KEGG" id="pme:NATL1_05971"/>
<dbReference type="eggNOG" id="COG1348">
    <property type="taxonomic scope" value="Bacteria"/>
</dbReference>
<dbReference type="HOGENOM" id="CLU_059373_2_0_3"/>
<dbReference type="UniPathway" id="UPA00670"/>
<dbReference type="Proteomes" id="UP000002592">
    <property type="component" value="Chromosome"/>
</dbReference>
<dbReference type="GO" id="GO:0051539">
    <property type="term" value="F:4 iron, 4 sulfur cluster binding"/>
    <property type="evidence" value="ECO:0007669"/>
    <property type="project" value="UniProtKB-UniRule"/>
</dbReference>
<dbReference type="GO" id="GO:0005524">
    <property type="term" value="F:ATP binding"/>
    <property type="evidence" value="ECO:0007669"/>
    <property type="project" value="UniProtKB-UniRule"/>
</dbReference>
<dbReference type="GO" id="GO:0046872">
    <property type="term" value="F:metal ion binding"/>
    <property type="evidence" value="ECO:0007669"/>
    <property type="project" value="UniProtKB-KW"/>
</dbReference>
<dbReference type="GO" id="GO:0016730">
    <property type="term" value="F:oxidoreductase activity, acting on iron-sulfur proteins as donors"/>
    <property type="evidence" value="ECO:0007669"/>
    <property type="project" value="InterPro"/>
</dbReference>
<dbReference type="GO" id="GO:0016636">
    <property type="term" value="F:oxidoreductase activity, acting on the CH-CH group of donors, iron-sulfur protein as acceptor"/>
    <property type="evidence" value="ECO:0007669"/>
    <property type="project" value="UniProtKB-UniRule"/>
</dbReference>
<dbReference type="GO" id="GO:0036068">
    <property type="term" value="P:light-independent chlorophyll biosynthetic process"/>
    <property type="evidence" value="ECO:0007669"/>
    <property type="project" value="UniProtKB-UniRule"/>
</dbReference>
<dbReference type="GO" id="GO:0019685">
    <property type="term" value="P:photosynthesis, dark reaction"/>
    <property type="evidence" value="ECO:0007669"/>
    <property type="project" value="InterPro"/>
</dbReference>
<dbReference type="CDD" id="cd02032">
    <property type="entry name" value="Bchl-like"/>
    <property type="match status" value="1"/>
</dbReference>
<dbReference type="Gene3D" id="3.40.50.300">
    <property type="entry name" value="P-loop containing nucleotide triphosphate hydrolases"/>
    <property type="match status" value="1"/>
</dbReference>
<dbReference type="HAMAP" id="MF_00355">
    <property type="entry name" value="ChlL_BchL"/>
    <property type="match status" value="1"/>
</dbReference>
<dbReference type="InterPro" id="IPR030655">
    <property type="entry name" value="NifH/chlL_CS"/>
</dbReference>
<dbReference type="InterPro" id="IPR000392">
    <property type="entry name" value="NifH/frxC"/>
</dbReference>
<dbReference type="InterPro" id="IPR027417">
    <property type="entry name" value="P-loop_NTPase"/>
</dbReference>
<dbReference type="InterPro" id="IPR005971">
    <property type="entry name" value="Protochlorophyllide_ATP-bd"/>
</dbReference>
<dbReference type="NCBIfam" id="TIGR01281">
    <property type="entry name" value="DPOR_bchL"/>
    <property type="match status" value="1"/>
</dbReference>
<dbReference type="PANTHER" id="PTHR42864">
    <property type="entry name" value="LIGHT-INDEPENDENT PROTOCHLOROPHYLLIDE REDUCTASE IRON-SULFUR ATP-BINDING PROTEIN"/>
    <property type="match status" value="1"/>
</dbReference>
<dbReference type="PANTHER" id="PTHR42864:SF2">
    <property type="entry name" value="LIGHT-INDEPENDENT PROTOCHLOROPHYLLIDE REDUCTASE IRON-SULFUR ATP-BINDING PROTEIN"/>
    <property type="match status" value="1"/>
</dbReference>
<dbReference type="Pfam" id="PF00142">
    <property type="entry name" value="Fer4_NifH"/>
    <property type="match status" value="1"/>
</dbReference>
<dbReference type="PIRSF" id="PIRSF000363">
    <property type="entry name" value="Nitrogenase_iron"/>
    <property type="match status" value="1"/>
</dbReference>
<dbReference type="PRINTS" id="PR00091">
    <property type="entry name" value="NITROGNASEII"/>
</dbReference>
<dbReference type="SUPFAM" id="SSF52540">
    <property type="entry name" value="P-loop containing nucleoside triphosphate hydrolases"/>
    <property type="match status" value="1"/>
</dbReference>
<dbReference type="PROSITE" id="PS00746">
    <property type="entry name" value="NIFH_FRXC_1"/>
    <property type="match status" value="1"/>
</dbReference>
<dbReference type="PROSITE" id="PS00692">
    <property type="entry name" value="NIFH_FRXC_2"/>
    <property type="match status" value="1"/>
</dbReference>
<dbReference type="PROSITE" id="PS51026">
    <property type="entry name" value="NIFH_FRXC_3"/>
    <property type="match status" value="1"/>
</dbReference>
<reference key="1">
    <citation type="journal article" date="2007" name="PLoS Genet.">
        <title>Patterns and implications of gene gain and loss in the evolution of Prochlorococcus.</title>
        <authorList>
            <person name="Kettler G.C."/>
            <person name="Martiny A.C."/>
            <person name="Huang K."/>
            <person name="Zucker J."/>
            <person name="Coleman M.L."/>
            <person name="Rodrigue S."/>
            <person name="Chen F."/>
            <person name="Lapidus A."/>
            <person name="Ferriera S."/>
            <person name="Johnson J."/>
            <person name="Steglich C."/>
            <person name="Church G.M."/>
            <person name="Richardson P."/>
            <person name="Chisholm S.W."/>
        </authorList>
    </citation>
    <scope>NUCLEOTIDE SEQUENCE [LARGE SCALE GENOMIC DNA]</scope>
    <source>
        <strain>NATL1A</strain>
    </source>
</reference>
<gene>
    <name evidence="1" type="primary">chlL</name>
    <name type="ordered locus">NATL1_05971</name>
</gene>
<evidence type="ECO:0000255" key="1">
    <source>
        <dbReference type="HAMAP-Rule" id="MF_00355"/>
    </source>
</evidence>
<evidence type="ECO:0000256" key="2">
    <source>
        <dbReference type="SAM" id="MobiDB-lite"/>
    </source>
</evidence>
<accession>A2C0Z9</accession>
<protein>
    <recommendedName>
        <fullName evidence="1">Light-independent protochlorophyllide reductase iron-sulfur ATP-binding protein</fullName>
        <shortName evidence="1">DPOR subunit L</shortName>
        <shortName evidence="1">LI-POR subunit L</shortName>
        <ecNumber evidence="1">1.3.7.7</ecNumber>
    </recommendedName>
</protein>
<comment type="function">
    <text evidence="1">Component of the dark-operative protochlorophyllide reductase (DPOR) that uses Mg-ATP and reduced ferredoxin to reduce ring D of protochlorophyllide (Pchlide) to form chlorophyllide a (Chlide). This reaction is light-independent. The L component serves as a unique electron donor to the NB-component of the complex, and binds Mg-ATP.</text>
</comment>
<comment type="catalytic activity">
    <reaction evidence="1">
        <text>chlorophyllide a + oxidized 2[4Fe-4S]-[ferredoxin] + 2 ADP + 2 phosphate = protochlorophyllide a + reduced 2[4Fe-4S]-[ferredoxin] + 2 ATP + 2 H2O</text>
        <dbReference type="Rhea" id="RHEA:28202"/>
        <dbReference type="Rhea" id="RHEA-COMP:10002"/>
        <dbReference type="Rhea" id="RHEA-COMP:10004"/>
        <dbReference type="ChEBI" id="CHEBI:15377"/>
        <dbReference type="ChEBI" id="CHEBI:30616"/>
        <dbReference type="ChEBI" id="CHEBI:33722"/>
        <dbReference type="ChEBI" id="CHEBI:33723"/>
        <dbReference type="ChEBI" id="CHEBI:43474"/>
        <dbReference type="ChEBI" id="CHEBI:83348"/>
        <dbReference type="ChEBI" id="CHEBI:83350"/>
        <dbReference type="ChEBI" id="CHEBI:456216"/>
        <dbReference type="EC" id="1.3.7.7"/>
    </reaction>
</comment>
<comment type="cofactor">
    <cofactor evidence="1">
        <name>[4Fe-4S] cluster</name>
        <dbReference type="ChEBI" id="CHEBI:49883"/>
    </cofactor>
    <text evidence="1">Binds 1 [4Fe-4S] cluster per dimer.</text>
</comment>
<comment type="pathway">
    <text evidence="1">Porphyrin-containing compound metabolism; chlorophyll biosynthesis (light-independent).</text>
</comment>
<comment type="subunit">
    <text evidence="1">Homodimer. Protochlorophyllide reductase is composed of three subunits; ChlL, ChlN and ChlB.</text>
</comment>
<comment type="similarity">
    <text evidence="1">Belongs to the NifH/BchL/ChlL family.</text>
</comment>
<feature type="chain" id="PRO_0000324065" description="Light-independent protochlorophyllide reductase iron-sulfur ATP-binding protein">
    <location>
        <begin position="1"/>
        <end position="296"/>
    </location>
</feature>
<feature type="region of interest" description="Disordered" evidence="2">
    <location>
        <begin position="1"/>
        <end position="20"/>
    </location>
</feature>
<feature type="compositionally biased region" description="Basic and acidic residues" evidence="2">
    <location>
        <begin position="1"/>
        <end position="11"/>
    </location>
</feature>
<feature type="binding site" evidence="1">
    <location>
        <begin position="39"/>
        <end position="44"/>
    </location>
    <ligand>
        <name>ATP</name>
        <dbReference type="ChEBI" id="CHEBI:30616"/>
    </ligand>
</feature>
<feature type="binding site" evidence="1">
    <location>
        <position position="43"/>
    </location>
    <ligand>
        <name>Mg(2+)</name>
        <dbReference type="ChEBI" id="CHEBI:18420"/>
    </ligand>
</feature>
<feature type="binding site" evidence="1">
    <location>
        <position position="68"/>
    </location>
    <ligand>
        <name>ATP</name>
        <dbReference type="ChEBI" id="CHEBI:30616"/>
    </ligand>
</feature>
<feature type="binding site" evidence="1">
    <location>
        <position position="124"/>
    </location>
    <ligand>
        <name>[4Fe-4S] cluster</name>
        <dbReference type="ChEBI" id="CHEBI:49883"/>
        <note>ligand shared between dimeric partners</note>
    </ligand>
</feature>
<feature type="binding site" evidence="1">
    <location>
        <position position="158"/>
    </location>
    <ligand>
        <name>[4Fe-4S] cluster</name>
        <dbReference type="ChEBI" id="CHEBI:49883"/>
        <note>ligand shared between dimeric partners</note>
    </ligand>
</feature>
<feature type="binding site" evidence="1">
    <location>
        <begin position="209"/>
        <end position="210"/>
    </location>
    <ligand>
        <name>ATP</name>
        <dbReference type="ChEBI" id="CHEBI:30616"/>
    </ligand>
</feature>
<keyword id="KW-0004">4Fe-4S</keyword>
<keyword id="KW-0067">ATP-binding</keyword>
<keyword id="KW-0149">Chlorophyll biosynthesis</keyword>
<keyword id="KW-0408">Iron</keyword>
<keyword id="KW-0411">Iron-sulfur</keyword>
<keyword id="KW-0460">Magnesium</keyword>
<keyword id="KW-0479">Metal-binding</keyword>
<keyword id="KW-0547">Nucleotide-binding</keyword>
<keyword id="KW-0560">Oxidoreductase</keyword>
<keyword id="KW-0602">Photosynthesis</keyword>
<organism>
    <name type="scientific">Prochlorococcus marinus (strain NATL1A)</name>
    <dbReference type="NCBI Taxonomy" id="167555"/>
    <lineage>
        <taxon>Bacteria</taxon>
        <taxon>Bacillati</taxon>
        <taxon>Cyanobacteriota</taxon>
        <taxon>Cyanophyceae</taxon>
        <taxon>Synechococcales</taxon>
        <taxon>Prochlorococcaceae</taxon>
        <taxon>Prochlorococcus</taxon>
    </lineage>
</organism>